<feature type="chain" id="PRO_0000289360" description="Lipoprotein signal peptidase">
    <location>
        <begin position="1"/>
        <end position="160"/>
    </location>
</feature>
<feature type="transmembrane region" description="Helical" evidence="1">
    <location>
        <begin position="6"/>
        <end position="26"/>
    </location>
</feature>
<feature type="transmembrane region" description="Helical" evidence="1">
    <location>
        <begin position="58"/>
        <end position="78"/>
    </location>
</feature>
<feature type="transmembrane region" description="Helical" evidence="1">
    <location>
        <begin position="95"/>
        <end position="115"/>
    </location>
</feature>
<feature type="transmembrane region" description="Helical" evidence="1">
    <location>
        <begin position="127"/>
        <end position="147"/>
    </location>
</feature>
<feature type="active site" evidence="1">
    <location>
        <position position="117"/>
    </location>
</feature>
<feature type="active site" evidence="1">
    <location>
        <position position="135"/>
    </location>
</feature>
<dbReference type="EC" id="3.4.23.36" evidence="1"/>
<dbReference type="EMBL" id="AE014291">
    <property type="protein sequence ID" value="AAN29102.1"/>
    <property type="molecule type" value="Genomic_DNA"/>
</dbReference>
<dbReference type="EMBL" id="CP002997">
    <property type="protein sequence ID" value="AEM17514.1"/>
    <property type="molecule type" value="Genomic_DNA"/>
</dbReference>
<dbReference type="RefSeq" id="WP_002965397.1">
    <property type="nucleotide sequence ID" value="NZ_KN046804.1"/>
</dbReference>
<dbReference type="SMR" id="Q8G308"/>
<dbReference type="GeneID" id="97534439"/>
<dbReference type="KEGG" id="bms:BR0149"/>
<dbReference type="KEGG" id="bsi:BS1330_I0149"/>
<dbReference type="PATRIC" id="fig|204722.22.peg.1683"/>
<dbReference type="HOGENOM" id="CLU_083252_4_3_5"/>
<dbReference type="PhylomeDB" id="Q8G308"/>
<dbReference type="UniPathway" id="UPA00665"/>
<dbReference type="Proteomes" id="UP000007104">
    <property type="component" value="Chromosome I"/>
</dbReference>
<dbReference type="GO" id="GO:0005886">
    <property type="term" value="C:plasma membrane"/>
    <property type="evidence" value="ECO:0007669"/>
    <property type="project" value="UniProtKB-SubCell"/>
</dbReference>
<dbReference type="GO" id="GO:0004190">
    <property type="term" value="F:aspartic-type endopeptidase activity"/>
    <property type="evidence" value="ECO:0007669"/>
    <property type="project" value="UniProtKB-UniRule"/>
</dbReference>
<dbReference type="GO" id="GO:0006508">
    <property type="term" value="P:proteolysis"/>
    <property type="evidence" value="ECO:0007669"/>
    <property type="project" value="UniProtKB-KW"/>
</dbReference>
<dbReference type="HAMAP" id="MF_00161">
    <property type="entry name" value="LspA"/>
    <property type="match status" value="1"/>
</dbReference>
<dbReference type="InterPro" id="IPR001872">
    <property type="entry name" value="Peptidase_A8"/>
</dbReference>
<dbReference type="NCBIfam" id="TIGR00077">
    <property type="entry name" value="lspA"/>
    <property type="match status" value="1"/>
</dbReference>
<dbReference type="PANTHER" id="PTHR33695">
    <property type="entry name" value="LIPOPROTEIN SIGNAL PEPTIDASE"/>
    <property type="match status" value="1"/>
</dbReference>
<dbReference type="PANTHER" id="PTHR33695:SF1">
    <property type="entry name" value="LIPOPROTEIN SIGNAL PEPTIDASE"/>
    <property type="match status" value="1"/>
</dbReference>
<dbReference type="Pfam" id="PF01252">
    <property type="entry name" value="Peptidase_A8"/>
    <property type="match status" value="1"/>
</dbReference>
<dbReference type="PRINTS" id="PR00781">
    <property type="entry name" value="LIPOSIGPTASE"/>
</dbReference>
<dbReference type="PROSITE" id="PS00855">
    <property type="entry name" value="SPASE_II"/>
    <property type="match status" value="1"/>
</dbReference>
<sequence>MKRHAVWSSLFVVILAVLIDQGIKYLVESRMFYGQQIDLLPFLALFRTHNEGIAFSMLAWLHDGGLIAITLAVIAFVLYLWWTNAPERVFARYGFALVIGGAIGNLIDRVMHGYVVDYVLFHLPTWSFAVFNLADAFITIGAGLIILEEFLGWRRERISH</sequence>
<organism>
    <name type="scientific">Brucella suis biovar 1 (strain 1330)</name>
    <dbReference type="NCBI Taxonomy" id="204722"/>
    <lineage>
        <taxon>Bacteria</taxon>
        <taxon>Pseudomonadati</taxon>
        <taxon>Pseudomonadota</taxon>
        <taxon>Alphaproteobacteria</taxon>
        <taxon>Hyphomicrobiales</taxon>
        <taxon>Brucellaceae</taxon>
        <taxon>Brucella/Ochrobactrum group</taxon>
        <taxon>Brucella</taxon>
    </lineage>
</organism>
<keyword id="KW-0064">Aspartyl protease</keyword>
<keyword id="KW-0997">Cell inner membrane</keyword>
<keyword id="KW-1003">Cell membrane</keyword>
<keyword id="KW-0378">Hydrolase</keyword>
<keyword id="KW-0472">Membrane</keyword>
<keyword id="KW-0645">Protease</keyword>
<keyword id="KW-0812">Transmembrane</keyword>
<keyword id="KW-1133">Transmembrane helix</keyword>
<reference key="1">
    <citation type="journal article" date="2002" name="Proc. Natl. Acad. Sci. U.S.A.">
        <title>The Brucella suis genome reveals fundamental similarities between animal and plant pathogens and symbionts.</title>
        <authorList>
            <person name="Paulsen I.T."/>
            <person name="Seshadri R."/>
            <person name="Nelson K.E."/>
            <person name="Eisen J.A."/>
            <person name="Heidelberg J.F."/>
            <person name="Read T.D."/>
            <person name="Dodson R.J."/>
            <person name="Umayam L.A."/>
            <person name="Brinkac L.M."/>
            <person name="Beanan M.J."/>
            <person name="Daugherty S.C."/>
            <person name="DeBoy R.T."/>
            <person name="Durkin A.S."/>
            <person name="Kolonay J.F."/>
            <person name="Madupu R."/>
            <person name="Nelson W.C."/>
            <person name="Ayodeji B."/>
            <person name="Kraul M."/>
            <person name="Shetty J."/>
            <person name="Malek J.A."/>
            <person name="Van Aken S.E."/>
            <person name="Riedmuller S."/>
            <person name="Tettelin H."/>
            <person name="Gill S.R."/>
            <person name="White O."/>
            <person name="Salzberg S.L."/>
            <person name="Hoover D.L."/>
            <person name="Lindler L.E."/>
            <person name="Halling S.M."/>
            <person name="Boyle S.M."/>
            <person name="Fraser C.M."/>
        </authorList>
    </citation>
    <scope>NUCLEOTIDE SEQUENCE [LARGE SCALE GENOMIC DNA]</scope>
    <source>
        <strain>1330</strain>
    </source>
</reference>
<reference key="2">
    <citation type="journal article" date="2011" name="J. Bacteriol.">
        <title>Revised genome sequence of Brucella suis 1330.</title>
        <authorList>
            <person name="Tae H."/>
            <person name="Shallom S."/>
            <person name="Settlage R."/>
            <person name="Preston D."/>
            <person name="Adams L.G."/>
            <person name="Garner H.R."/>
        </authorList>
    </citation>
    <scope>NUCLEOTIDE SEQUENCE [LARGE SCALE GENOMIC DNA]</scope>
    <source>
        <strain>1330</strain>
    </source>
</reference>
<name>LSPA_BRUSU</name>
<evidence type="ECO:0000255" key="1">
    <source>
        <dbReference type="HAMAP-Rule" id="MF_00161"/>
    </source>
</evidence>
<proteinExistence type="inferred from homology"/>
<accession>Q8G308</accession>
<accession>G0KBC2</accession>
<gene>
    <name evidence="1" type="primary">lspA</name>
    <name type="ordered locus">BR0149</name>
    <name type="ordered locus">BS1330_I0149</name>
</gene>
<comment type="function">
    <text evidence="1">This protein specifically catalyzes the removal of signal peptides from prolipoproteins.</text>
</comment>
<comment type="catalytic activity">
    <reaction evidence="1">
        <text>Release of signal peptides from bacterial membrane prolipoproteins. Hydrolyzes -Xaa-Yaa-Zaa-|-(S,diacylglyceryl)Cys-, in which Xaa is hydrophobic (preferably Leu), and Yaa (Ala or Ser) and Zaa (Gly or Ala) have small, neutral side chains.</text>
        <dbReference type="EC" id="3.4.23.36"/>
    </reaction>
</comment>
<comment type="pathway">
    <text evidence="1">Protein modification; lipoprotein biosynthesis (signal peptide cleavage).</text>
</comment>
<comment type="subcellular location">
    <subcellularLocation>
        <location evidence="1">Cell inner membrane</location>
        <topology evidence="1">Multi-pass membrane protein</topology>
    </subcellularLocation>
</comment>
<comment type="similarity">
    <text evidence="1">Belongs to the peptidase A8 family.</text>
</comment>
<protein>
    <recommendedName>
        <fullName evidence="1">Lipoprotein signal peptidase</fullName>
        <ecNumber evidence="1">3.4.23.36</ecNumber>
    </recommendedName>
    <alternativeName>
        <fullName evidence="1">Prolipoprotein signal peptidase</fullName>
    </alternativeName>
    <alternativeName>
        <fullName evidence="1">Signal peptidase II</fullName>
        <shortName evidence="1">SPase II</shortName>
    </alternativeName>
</protein>